<gene>
    <name evidence="1" type="primary">rplS</name>
    <name type="ordered locus">BCA_3939</name>
</gene>
<feature type="chain" id="PRO_1000134555" description="Large ribosomal subunit protein bL19">
    <location>
        <begin position="1"/>
        <end position="114"/>
    </location>
</feature>
<accession>C1EP64</accession>
<reference key="1">
    <citation type="submission" date="2009-02" db="EMBL/GenBank/DDBJ databases">
        <title>Genome sequence of Bacillus cereus 03BB102.</title>
        <authorList>
            <person name="Dodson R.J."/>
            <person name="Jackson P."/>
            <person name="Munk A.C."/>
            <person name="Brettin T."/>
            <person name="Bruce D."/>
            <person name="Detter C."/>
            <person name="Tapia R."/>
            <person name="Han C."/>
            <person name="Sutton G."/>
            <person name="Sims D."/>
        </authorList>
    </citation>
    <scope>NUCLEOTIDE SEQUENCE [LARGE SCALE GENOMIC DNA]</scope>
    <source>
        <strain>03BB102</strain>
    </source>
</reference>
<comment type="function">
    <text evidence="1">This protein is located at the 30S-50S ribosomal subunit interface and may play a role in the structure and function of the aminoacyl-tRNA binding site.</text>
</comment>
<comment type="similarity">
    <text evidence="1">Belongs to the bacterial ribosomal protein bL19 family.</text>
</comment>
<sequence>MQQLIAEITKGQLKTDLPSFRPGDTLRVHVKVVEGTRERIQLFEGVVIKRRGGGISETFTVRKISYGVGVERTFPVHTPRIAKIEVLRRGKVRRAKLYYLRNLRGKKARIKEIR</sequence>
<protein>
    <recommendedName>
        <fullName evidence="1">Large ribosomal subunit protein bL19</fullName>
    </recommendedName>
    <alternativeName>
        <fullName evidence="2">50S ribosomal protein L19</fullName>
    </alternativeName>
</protein>
<dbReference type="EMBL" id="CP001407">
    <property type="protein sequence ID" value="ACO30306.1"/>
    <property type="molecule type" value="Genomic_DNA"/>
</dbReference>
<dbReference type="RefSeq" id="WP_001186516.1">
    <property type="nucleotide sequence ID" value="NZ_CP009318.1"/>
</dbReference>
<dbReference type="SMR" id="C1EP64"/>
<dbReference type="GeneID" id="93007272"/>
<dbReference type="KEGG" id="bcx:BCA_3939"/>
<dbReference type="PATRIC" id="fig|572264.18.peg.3896"/>
<dbReference type="Proteomes" id="UP000002210">
    <property type="component" value="Chromosome"/>
</dbReference>
<dbReference type="GO" id="GO:0022625">
    <property type="term" value="C:cytosolic large ribosomal subunit"/>
    <property type="evidence" value="ECO:0007669"/>
    <property type="project" value="TreeGrafter"/>
</dbReference>
<dbReference type="GO" id="GO:0003735">
    <property type="term" value="F:structural constituent of ribosome"/>
    <property type="evidence" value="ECO:0007669"/>
    <property type="project" value="InterPro"/>
</dbReference>
<dbReference type="GO" id="GO:0006412">
    <property type="term" value="P:translation"/>
    <property type="evidence" value="ECO:0007669"/>
    <property type="project" value="UniProtKB-UniRule"/>
</dbReference>
<dbReference type="FunFam" id="2.30.30.790:FF:000001">
    <property type="entry name" value="50S ribosomal protein L19"/>
    <property type="match status" value="1"/>
</dbReference>
<dbReference type="Gene3D" id="2.30.30.790">
    <property type="match status" value="1"/>
</dbReference>
<dbReference type="HAMAP" id="MF_00402">
    <property type="entry name" value="Ribosomal_bL19"/>
    <property type="match status" value="1"/>
</dbReference>
<dbReference type="InterPro" id="IPR001857">
    <property type="entry name" value="Ribosomal_bL19"/>
</dbReference>
<dbReference type="InterPro" id="IPR018257">
    <property type="entry name" value="Ribosomal_bL19_CS"/>
</dbReference>
<dbReference type="InterPro" id="IPR038657">
    <property type="entry name" value="Ribosomal_bL19_sf"/>
</dbReference>
<dbReference type="InterPro" id="IPR008991">
    <property type="entry name" value="Translation_prot_SH3-like_sf"/>
</dbReference>
<dbReference type="NCBIfam" id="TIGR01024">
    <property type="entry name" value="rplS_bact"/>
    <property type="match status" value="1"/>
</dbReference>
<dbReference type="PANTHER" id="PTHR15680:SF9">
    <property type="entry name" value="LARGE RIBOSOMAL SUBUNIT PROTEIN BL19M"/>
    <property type="match status" value="1"/>
</dbReference>
<dbReference type="PANTHER" id="PTHR15680">
    <property type="entry name" value="RIBOSOMAL PROTEIN L19"/>
    <property type="match status" value="1"/>
</dbReference>
<dbReference type="Pfam" id="PF01245">
    <property type="entry name" value="Ribosomal_L19"/>
    <property type="match status" value="1"/>
</dbReference>
<dbReference type="PIRSF" id="PIRSF002191">
    <property type="entry name" value="Ribosomal_L19"/>
    <property type="match status" value="1"/>
</dbReference>
<dbReference type="PRINTS" id="PR00061">
    <property type="entry name" value="RIBOSOMALL19"/>
</dbReference>
<dbReference type="SUPFAM" id="SSF50104">
    <property type="entry name" value="Translation proteins SH3-like domain"/>
    <property type="match status" value="1"/>
</dbReference>
<dbReference type="PROSITE" id="PS01015">
    <property type="entry name" value="RIBOSOMAL_L19"/>
    <property type="match status" value="1"/>
</dbReference>
<evidence type="ECO:0000255" key="1">
    <source>
        <dbReference type="HAMAP-Rule" id="MF_00402"/>
    </source>
</evidence>
<evidence type="ECO:0000305" key="2"/>
<organism>
    <name type="scientific">Bacillus cereus (strain 03BB102)</name>
    <dbReference type="NCBI Taxonomy" id="572264"/>
    <lineage>
        <taxon>Bacteria</taxon>
        <taxon>Bacillati</taxon>
        <taxon>Bacillota</taxon>
        <taxon>Bacilli</taxon>
        <taxon>Bacillales</taxon>
        <taxon>Bacillaceae</taxon>
        <taxon>Bacillus</taxon>
        <taxon>Bacillus cereus group</taxon>
    </lineage>
</organism>
<proteinExistence type="inferred from homology"/>
<keyword id="KW-0687">Ribonucleoprotein</keyword>
<keyword id="KW-0689">Ribosomal protein</keyword>
<name>RL19_BACC3</name>